<keyword id="KW-0903">Direct protein sequencing</keyword>
<keyword id="KW-1015">Disulfide bond</keyword>
<keyword id="KW-0528">Neurotoxin</keyword>
<keyword id="KW-0964">Secreted</keyword>
<keyword id="KW-0800">Toxin</keyword>
<evidence type="ECO:0000269" key="1">
    <source>
    </source>
</evidence>
<evidence type="ECO:0000305" key="2"/>
<evidence type="ECO:0000305" key="3">
    <source>
    </source>
</evidence>
<protein>
    <recommendedName>
        <fullName>Conotoxin qc16a</fullName>
    </recommendedName>
</protein>
<comment type="function">
    <text evidence="1">Causes reversible depression symptom in mice when injected intracranially.</text>
</comment>
<comment type="subcellular location">
    <subcellularLocation>
        <location evidence="1">Secreted</location>
    </subcellularLocation>
</comment>
<comment type="tissue specificity">
    <text evidence="3">Expressed by the venom duct.</text>
</comment>
<comment type="domain">
    <text evidence="2">The cysteine framework is XVI (C-C-CC).</text>
</comment>
<comment type="mass spectrometry" mass="1174.5" method="Electrospray" evidence="1"/>
<comment type="miscellaneous">
    <text>Found in the dissected venom (DV).</text>
</comment>
<comment type="miscellaneous">
    <text evidence="3">Negative results: has no strong effect on the whole-cell currents of neurons and the currents of Drosophila Shaker channels, human BK channels (KCNM) and Nav1.7/SCN9A channels.</text>
</comment>
<comment type="online information" name="Biological Magnetic Resonance Data Bank">
    <link uri="https://bmrb.io/data_library/summary/index.php?bmrbId=20128"/>
</comment>
<proteinExistence type="evidence at protein level"/>
<dbReference type="GO" id="GO:0005576">
    <property type="term" value="C:extracellular region"/>
    <property type="evidence" value="ECO:0007669"/>
    <property type="project" value="UniProtKB-SubCell"/>
</dbReference>
<dbReference type="GO" id="GO:0090729">
    <property type="term" value="F:toxin activity"/>
    <property type="evidence" value="ECO:0007669"/>
    <property type="project" value="UniProtKB-KW"/>
</dbReference>
<organism>
    <name type="scientific">Conus quercinus</name>
    <name type="common">Oak cone</name>
    <dbReference type="NCBI Taxonomy" id="101313"/>
    <lineage>
        <taxon>Eukaryota</taxon>
        <taxon>Metazoa</taxon>
        <taxon>Spiralia</taxon>
        <taxon>Lophotrochozoa</taxon>
        <taxon>Mollusca</taxon>
        <taxon>Gastropoda</taxon>
        <taxon>Caenogastropoda</taxon>
        <taxon>Neogastropoda</taxon>
        <taxon>Conoidea</taxon>
        <taxon>Conidae</taxon>
        <taxon>Conus</taxon>
        <taxon>Lividoconus</taxon>
    </lineage>
</organism>
<reference key="1">
    <citation type="journal article" date="2011" name="Peptides">
        <title>A novel conotoxin, qc16a, with a unique cysteine framework and folding.</title>
        <authorList>
            <person name="Ye M."/>
            <person name="Hong J."/>
            <person name="Zhou M."/>
            <person name="Huang L."/>
            <person name="Shao X."/>
            <person name="Yang Y."/>
            <person name="Sigworth F.J."/>
            <person name="Chi C."/>
            <person name="Lin D."/>
            <person name="Wang C."/>
        </authorList>
    </citation>
    <scope>PROTEIN SEQUENCE</scope>
    <scope>SYNTHESIS</scope>
    <scope>FUNCTION</scope>
    <scope>DISULFIDE BOND</scope>
    <scope>MASS SPECTROMETRY</scope>
    <scope>STRUCTURE BY NMR</scope>
    <scope>MUTAGENESIS OF ASP-1; HIS-7 AND ASN-8</scope>
    <scope>SUBCELLULAR LOCATION</scope>
    <source>
        <tissue>Venom</tissue>
    </source>
</reference>
<name>CUGA_CONQU</name>
<feature type="peptide" id="PRO_0000415308" description="Conotoxin qc16a">
    <location>
        <begin position="1"/>
        <end position="11"/>
    </location>
</feature>
<feature type="site" description="Essential for activity">
    <location>
        <position position="1"/>
    </location>
</feature>
<feature type="site" description="Essential for activity">
    <location>
        <position position="7"/>
    </location>
</feature>
<feature type="site" description="Essential for activity">
    <location>
        <position position="8"/>
    </location>
</feature>
<feature type="disulfide bond" evidence="1">
    <location>
        <begin position="2"/>
        <end position="11"/>
    </location>
</feature>
<feature type="disulfide bond" evidence="1">
    <location>
        <begin position="5"/>
        <end position="10"/>
    </location>
</feature>
<feature type="mutagenesis site" description="Has an abolished activity. Has an abolished activity; when associated with A-7 or A-8." evidence="1">
    <location>
        <position position="1"/>
    </location>
</feature>
<feature type="mutagenesis site" description="Has an abolished activity. Has an abolished activity; when associated with Del-1." evidence="1">
    <original>H</original>
    <variation>A</variation>
    <location>
        <position position="7"/>
    </location>
</feature>
<feature type="mutagenesis site" description="Has an excitatory activity before killing the mice. Has an abolished activity; when associated with Del-1." evidence="1">
    <original>N</original>
    <variation>A</variation>
    <location>
        <position position="8"/>
    </location>
</feature>
<sequence length="11" mass="1178">DCQPCGHNVCC</sequence>
<accession>P0DJC3</accession>
<accession>P86140</accession>